<dbReference type="EMBL" id="Y00772">
    <property type="protein sequence ID" value="CAA68741.1"/>
    <property type="molecule type" value="Genomic_DNA"/>
</dbReference>
<dbReference type="EMBL" id="CP000742">
    <property type="protein sequence ID" value="ABR54764.1"/>
    <property type="molecule type" value="Genomic_DNA"/>
</dbReference>
<dbReference type="PIR" id="S01780">
    <property type="entry name" value="R5MX23"/>
</dbReference>
<dbReference type="RefSeq" id="WP_011972665.1">
    <property type="nucleotide sequence ID" value="NC_009634.1"/>
</dbReference>
<dbReference type="SMR" id="P10143"/>
<dbReference type="STRING" id="406327.Mevan_0859"/>
<dbReference type="GeneID" id="5324903"/>
<dbReference type="KEGG" id="mvn:Mevan_0859"/>
<dbReference type="eggNOG" id="arCOG04072">
    <property type="taxonomic scope" value="Archaea"/>
</dbReference>
<dbReference type="HOGENOM" id="CLU_037562_4_2_2"/>
<dbReference type="OrthoDB" id="7751at2157"/>
<dbReference type="Proteomes" id="UP000001107">
    <property type="component" value="Chromosome"/>
</dbReference>
<dbReference type="GO" id="GO:1990904">
    <property type="term" value="C:ribonucleoprotein complex"/>
    <property type="evidence" value="ECO:0007669"/>
    <property type="project" value="UniProtKB-KW"/>
</dbReference>
<dbReference type="GO" id="GO:0005840">
    <property type="term" value="C:ribosome"/>
    <property type="evidence" value="ECO:0007669"/>
    <property type="project" value="UniProtKB-KW"/>
</dbReference>
<dbReference type="GO" id="GO:0019843">
    <property type="term" value="F:rRNA binding"/>
    <property type="evidence" value="ECO:0007669"/>
    <property type="project" value="UniProtKB-UniRule"/>
</dbReference>
<dbReference type="GO" id="GO:0003735">
    <property type="term" value="F:structural constituent of ribosome"/>
    <property type="evidence" value="ECO:0007669"/>
    <property type="project" value="InterPro"/>
</dbReference>
<dbReference type="GO" id="GO:0006412">
    <property type="term" value="P:translation"/>
    <property type="evidence" value="ECO:0007669"/>
    <property type="project" value="UniProtKB-UniRule"/>
</dbReference>
<dbReference type="FunFam" id="3.30.70.330:FF:000532">
    <property type="entry name" value="50S ribosomal protein L23"/>
    <property type="match status" value="1"/>
</dbReference>
<dbReference type="Gene3D" id="3.30.70.330">
    <property type="match status" value="1"/>
</dbReference>
<dbReference type="HAMAP" id="MF_01369_A">
    <property type="entry name" value="Ribosomal_uL23_A"/>
    <property type="match status" value="1"/>
</dbReference>
<dbReference type="HAMAP" id="MF_01369_B">
    <property type="entry name" value="Ribosomal_uL23_B"/>
    <property type="match status" value="1"/>
</dbReference>
<dbReference type="InterPro" id="IPR012677">
    <property type="entry name" value="Nucleotide-bd_a/b_plait_sf"/>
</dbReference>
<dbReference type="InterPro" id="IPR019985">
    <property type="entry name" value="Ribosomal_uL23"/>
</dbReference>
<dbReference type="InterPro" id="IPR013025">
    <property type="entry name" value="Ribosomal_uL23-like"/>
</dbReference>
<dbReference type="InterPro" id="IPR012678">
    <property type="entry name" value="Ribosomal_uL23/eL15/eS24_sf"/>
</dbReference>
<dbReference type="InterPro" id="IPR001014">
    <property type="entry name" value="Ribosomal_uL23_CS"/>
</dbReference>
<dbReference type="NCBIfam" id="NF011118">
    <property type="entry name" value="PRK14548.1"/>
    <property type="match status" value="1"/>
</dbReference>
<dbReference type="NCBIfam" id="TIGR03636">
    <property type="entry name" value="uL23_arch"/>
    <property type="match status" value="1"/>
</dbReference>
<dbReference type="PANTHER" id="PTHR11620">
    <property type="entry name" value="60S RIBOSOMAL PROTEIN L23A"/>
    <property type="match status" value="1"/>
</dbReference>
<dbReference type="Pfam" id="PF00276">
    <property type="entry name" value="Ribosomal_L23"/>
    <property type="match status" value="1"/>
</dbReference>
<dbReference type="SUPFAM" id="SSF54189">
    <property type="entry name" value="Ribosomal proteins S24e, L23 and L15e"/>
    <property type="match status" value="1"/>
</dbReference>
<dbReference type="PROSITE" id="PS00050">
    <property type="entry name" value="RIBOSOMAL_L23"/>
    <property type="match status" value="1"/>
</dbReference>
<feature type="chain" id="PRO_0000129439" description="Large ribosomal subunit protein uL23">
    <location>
        <begin position="1"/>
        <end position="86"/>
    </location>
</feature>
<protein>
    <recommendedName>
        <fullName evidence="1">Large ribosomal subunit protein uL23</fullName>
    </recommendedName>
    <alternativeName>
        <fullName evidence="2">50S ribosomal protein L23</fullName>
    </alternativeName>
    <alternativeName>
        <fullName>ML7</fullName>
    </alternativeName>
</protein>
<gene>
    <name evidence="1" type="primary">rpl23</name>
    <name type="synonym">mva-23</name>
    <name type="ordered locus">Mevan_0859</name>
</gene>
<sequence>MDAFDVIKTPIVSEKTMKLIEEENRLVFYVERKATKEDIKEAIKQLFNAEVAEVNTNITPKGQKKAYIKLKDEYNAGEVAASLGIY</sequence>
<comment type="function">
    <text evidence="1">Binds to 23S rRNA. One of the proteins that surrounds the polypeptide exit tunnel on the outside of the ribosome.</text>
</comment>
<comment type="subunit">
    <text evidence="1">Part of the 50S ribosomal subunit. Contacts protein L29.</text>
</comment>
<comment type="similarity">
    <text evidence="1">Belongs to the universal ribosomal protein uL23 family.</text>
</comment>
<accession>P10143</accession>
<accession>A6UQJ2</accession>
<organism>
    <name type="scientific">Methanococcus vannielii (strain ATCC 35089 / DSM 1224 / JCM 13029 / OCM 148 / SB)</name>
    <dbReference type="NCBI Taxonomy" id="406327"/>
    <lineage>
        <taxon>Archaea</taxon>
        <taxon>Methanobacteriati</taxon>
        <taxon>Methanobacteriota</taxon>
        <taxon>Methanomada group</taxon>
        <taxon>Methanococci</taxon>
        <taxon>Methanococcales</taxon>
        <taxon>Methanococcaceae</taxon>
        <taxon>Methanococcus</taxon>
    </lineage>
</organism>
<keyword id="KW-0903">Direct protein sequencing</keyword>
<keyword id="KW-0687">Ribonucleoprotein</keyword>
<keyword id="KW-0689">Ribosomal protein</keyword>
<keyword id="KW-0694">RNA-binding</keyword>
<keyword id="KW-0699">rRNA-binding</keyword>
<name>RL23_METVS</name>
<proteinExistence type="evidence at protein level"/>
<evidence type="ECO:0000255" key="1">
    <source>
        <dbReference type="HAMAP-Rule" id="MF_01369"/>
    </source>
</evidence>
<evidence type="ECO:0000305" key="2"/>
<reference key="1">
    <citation type="journal article" date="1988" name="FEBS Lett.">
        <title>Sequence of the gene for ribosomal protein L23 from the archaebacterium Methanococcus vannielii.</title>
        <authorList>
            <person name="Koepke A.K.E."/>
            <person name="Wittmann-Liebold B."/>
        </authorList>
    </citation>
    <scope>NUCLEOTIDE SEQUENCE [GENOMIC DNA]</scope>
    <scope>PROTEIN SEQUENCE OF 1-19</scope>
</reference>
<reference key="2">
    <citation type="submission" date="2007-06" db="EMBL/GenBank/DDBJ databases">
        <title>Complete sequence of Methanococcus vannielii SB.</title>
        <authorList>
            <consortium name="US DOE Joint Genome Institute"/>
            <person name="Copeland A."/>
            <person name="Lucas S."/>
            <person name="Lapidus A."/>
            <person name="Barry K."/>
            <person name="Glavina del Rio T."/>
            <person name="Dalin E."/>
            <person name="Tice H."/>
            <person name="Pitluck S."/>
            <person name="Chain P."/>
            <person name="Malfatti S."/>
            <person name="Shin M."/>
            <person name="Vergez L."/>
            <person name="Schmutz J."/>
            <person name="Larimer F."/>
            <person name="Land M."/>
            <person name="Hauser L."/>
            <person name="Kyrpides N."/>
            <person name="Anderson I."/>
            <person name="Sieprawska-Lupa M."/>
            <person name="Whitman W.B."/>
            <person name="Richardson P."/>
        </authorList>
    </citation>
    <scope>NUCLEOTIDE SEQUENCE [LARGE SCALE GENOMIC DNA]</scope>
    <source>
        <strain>ATCC 35089 / DSM 1224 / JCM 13029 / OCM 148 / SB</strain>
    </source>
</reference>